<keyword id="KW-0249">Electron transport</keyword>
<keyword id="KW-0349">Heme</keyword>
<keyword id="KW-0408">Iron</keyword>
<keyword id="KW-0472">Membrane</keyword>
<keyword id="KW-0479">Metal-binding</keyword>
<keyword id="KW-0496">Mitochondrion</keyword>
<keyword id="KW-0999">Mitochondrion inner membrane</keyword>
<keyword id="KW-0679">Respiratory chain</keyword>
<keyword id="KW-0812">Transmembrane</keyword>
<keyword id="KW-1133">Transmembrane helix</keyword>
<keyword id="KW-0813">Transport</keyword>
<keyword id="KW-0830">Ubiquinone</keyword>
<gene>
    <name type="primary">MT-CYB</name>
    <name type="synonym">COB</name>
    <name type="synonym">CYTB</name>
    <name type="synonym">MTCYB</name>
</gene>
<sequence>MTNIRKSHPLMKIVNNAFIDLPAPSNISSWWNFGSLLGVCLILQILTGLFLAMHYTSDTTTAFSSVTHICRDVNYGWIIRYMHANGASMFFICLYMHVGRGLYYGSYTFLETWNIGVILLLTVMATAFMGYVLPWGQMSFWGATVITNLLSAIPYIGTNLVEWIWGGFSVDKATLTRFFAFHFILPFIIMAIAMVHLLFLHETGSNNPTGISSDTDKIPFHPYYTIKDILGALLLILTLMLLVLFAPDLLGDPDNYTPANPLNTPPHIKPEWYFLFAXAILRSIPNKLGGVLALAFSILILVLIPLLHTSKQGSMMFGPLSQCLFWALVADLLTLTWIGGQPVEHPYITIGQLASIMYFLFIVVLMPTAGTIENKLLKW</sequence>
<evidence type="ECO:0000250" key="1"/>
<evidence type="ECO:0000250" key="2">
    <source>
        <dbReference type="UniProtKB" id="P00157"/>
    </source>
</evidence>
<evidence type="ECO:0000255" key="3">
    <source>
        <dbReference type="PROSITE-ProRule" id="PRU00967"/>
    </source>
</evidence>
<evidence type="ECO:0000255" key="4">
    <source>
        <dbReference type="PROSITE-ProRule" id="PRU00968"/>
    </source>
</evidence>
<organism>
    <name type="scientific">Bison bonasus</name>
    <name type="common">European bison</name>
    <dbReference type="NCBI Taxonomy" id="9902"/>
    <lineage>
        <taxon>Eukaryota</taxon>
        <taxon>Metazoa</taxon>
        <taxon>Chordata</taxon>
        <taxon>Craniata</taxon>
        <taxon>Vertebrata</taxon>
        <taxon>Euteleostomi</taxon>
        <taxon>Mammalia</taxon>
        <taxon>Eutheria</taxon>
        <taxon>Laurasiatheria</taxon>
        <taxon>Artiodactyla</taxon>
        <taxon>Ruminantia</taxon>
        <taxon>Pecora</taxon>
        <taxon>Bovidae</taxon>
        <taxon>Bovinae</taxon>
        <taxon>Bison</taxon>
    </lineage>
</organism>
<proteinExistence type="inferred from homology"/>
<dbReference type="EMBL" id="Y15005">
    <property type="protein sequence ID" value="CAA75238.1"/>
    <property type="molecule type" value="Genomic_DNA"/>
</dbReference>
<dbReference type="GO" id="GO:0005743">
    <property type="term" value="C:mitochondrial inner membrane"/>
    <property type="evidence" value="ECO:0007669"/>
    <property type="project" value="UniProtKB-SubCell"/>
</dbReference>
<dbReference type="GO" id="GO:0045275">
    <property type="term" value="C:respiratory chain complex III"/>
    <property type="evidence" value="ECO:0007669"/>
    <property type="project" value="InterPro"/>
</dbReference>
<dbReference type="GO" id="GO:0046872">
    <property type="term" value="F:metal ion binding"/>
    <property type="evidence" value="ECO:0007669"/>
    <property type="project" value="UniProtKB-KW"/>
</dbReference>
<dbReference type="GO" id="GO:0008121">
    <property type="term" value="F:ubiquinol-cytochrome-c reductase activity"/>
    <property type="evidence" value="ECO:0007669"/>
    <property type="project" value="InterPro"/>
</dbReference>
<dbReference type="GO" id="GO:0006122">
    <property type="term" value="P:mitochondrial electron transport, ubiquinol to cytochrome c"/>
    <property type="evidence" value="ECO:0007669"/>
    <property type="project" value="TreeGrafter"/>
</dbReference>
<dbReference type="CDD" id="cd00290">
    <property type="entry name" value="cytochrome_b_C"/>
    <property type="match status" value="1"/>
</dbReference>
<dbReference type="CDD" id="cd00284">
    <property type="entry name" value="Cytochrome_b_N"/>
    <property type="match status" value="1"/>
</dbReference>
<dbReference type="FunFam" id="1.20.810.10:FF:000002">
    <property type="entry name" value="Cytochrome b"/>
    <property type="match status" value="1"/>
</dbReference>
<dbReference type="Gene3D" id="1.20.810.10">
    <property type="entry name" value="Cytochrome Bc1 Complex, Chain C"/>
    <property type="match status" value="1"/>
</dbReference>
<dbReference type="InterPro" id="IPR005798">
    <property type="entry name" value="Cyt_b/b6_C"/>
</dbReference>
<dbReference type="InterPro" id="IPR036150">
    <property type="entry name" value="Cyt_b/b6_C_sf"/>
</dbReference>
<dbReference type="InterPro" id="IPR005797">
    <property type="entry name" value="Cyt_b/b6_N"/>
</dbReference>
<dbReference type="InterPro" id="IPR027387">
    <property type="entry name" value="Cytb/b6-like_sf"/>
</dbReference>
<dbReference type="InterPro" id="IPR030689">
    <property type="entry name" value="Cytochrome_b"/>
</dbReference>
<dbReference type="InterPro" id="IPR048260">
    <property type="entry name" value="Cytochrome_b_C_euk/bac"/>
</dbReference>
<dbReference type="InterPro" id="IPR048259">
    <property type="entry name" value="Cytochrome_b_N_euk/bac"/>
</dbReference>
<dbReference type="InterPro" id="IPR016174">
    <property type="entry name" value="Di-haem_cyt_TM"/>
</dbReference>
<dbReference type="PANTHER" id="PTHR19271">
    <property type="entry name" value="CYTOCHROME B"/>
    <property type="match status" value="1"/>
</dbReference>
<dbReference type="PANTHER" id="PTHR19271:SF16">
    <property type="entry name" value="CYTOCHROME B"/>
    <property type="match status" value="1"/>
</dbReference>
<dbReference type="Pfam" id="PF00032">
    <property type="entry name" value="Cytochrom_B_C"/>
    <property type="match status" value="1"/>
</dbReference>
<dbReference type="Pfam" id="PF00033">
    <property type="entry name" value="Cytochrome_B"/>
    <property type="match status" value="1"/>
</dbReference>
<dbReference type="PIRSF" id="PIRSF038885">
    <property type="entry name" value="COB"/>
    <property type="match status" value="1"/>
</dbReference>
<dbReference type="SUPFAM" id="SSF81648">
    <property type="entry name" value="a domain/subunit of cytochrome bc1 complex (Ubiquinol-cytochrome c reductase)"/>
    <property type="match status" value="1"/>
</dbReference>
<dbReference type="SUPFAM" id="SSF81342">
    <property type="entry name" value="Transmembrane di-heme cytochromes"/>
    <property type="match status" value="1"/>
</dbReference>
<dbReference type="PROSITE" id="PS51003">
    <property type="entry name" value="CYTB_CTER"/>
    <property type="match status" value="1"/>
</dbReference>
<dbReference type="PROSITE" id="PS51002">
    <property type="entry name" value="CYTB_NTER"/>
    <property type="match status" value="1"/>
</dbReference>
<geneLocation type="mitochondrion"/>
<reference key="1">
    <citation type="journal article" date="1998" name="Z. Jagdwiss.">
        <title>Cytochrome b -- sequence differences between Wisent (Bison bison bonasus) and domestic cattle (Bos primigenius f. taurus).</title>
        <authorList>
            <person name="Zimmermann S."/>
            <person name="Zehner R."/>
            <person name="Herzog A."/>
        </authorList>
    </citation>
    <scope>NUCLEOTIDE SEQUENCE [GENOMIC DNA]</scope>
</reference>
<comment type="function">
    <text evidence="2">Component of the ubiquinol-cytochrome c reductase complex (complex III or cytochrome b-c1 complex) that is part of the mitochondrial respiratory chain. The b-c1 complex mediates electron transfer from ubiquinol to cytochrome c. Contributes to the generation of a proton gradient across the mitochondrial membrane that is then used for ATP synthesis.</text>
</comment>
<comment type="cofactor">
    <cofactor evidence="2">
        <name>heme b</name>
        <dbReference type="ChEBI" id="CHEBI:60344"/>
    </cofactor>
    <text evidence="2">Binds 2 heme b groups non-covalently.</text>
</comment>
<comment type="subunit">
    <text evidence="2">The cytochrome bc1 complex contains 11 subunits: 3 respiratory subunits (MT-CYB, CYC1 and UQCRFS1), 2 core proteins (UQCRC1 and UQCRC2) and 6 low-molecular weight proteins (UQCRH/QCR6, UQCRB/QCR7, UQCRQ/QCR8, UQCR10/QCR9, UQCR11/QCR10 and a cleavage product of UQCRFS1). This cytochrome bc1 complex then forms a dimer.</text>
</comment>
<comment type="subcellular location">
    <subcellularLocation>
        <location evidence="2">Mitochondrion inner membrane</location>
        <topology evidence="2">Multi-pass membrane protein</topology>
    </subcellularLocation>
</comment>
<comment type="miscellaneous">
    <text evidence="1">Heme 1 (or BL or b562) is low-potential and absorbs at about 562 nm, and heme 2 (or BH or b566) is high-potential and absorbs at about 566 nm.</text>
</comment>
<comment type="similarity">
    <text evidence="3 4">Belongs to the cytochrome b family.</text>
</comment>
<comment type="caution">
    <text evidence="2">The full-length protein contains only eight transmembrane helices, not nine as predicted by bioinformatics tools.</text>
</comment>
<protein>
    <recommendedName>
        <fullName>Cytochrome b</fullName>
    </recommendedName>
    <alternativeName>
        <fullName>Complex III subunit 3</fullName>
    </alternativeName>
    <alternativeName>
        <fullName>Complex III subunit III</fullName>
    </alternativeName>
    <alternativeName>
        <fullName>Cytochrome b-c1 complex subunit 3</fullName>
    </alternativeName>
    <alternativeName>
        <fullName>Ubiquinol-cytochrome-c reductase complex cytochrome b subunit</fullName>
    </alternativeName>
</protein>
<feature type="chain" id="PRO_0000060673" description="Cytochrome b">
    <location>
        <begin position="1"/>
        <end position="379"/>
    </location>
</feature>
<feature type="transmembrane region" description="Helical" evidence="2">
    <location>
        <begin position="33"/>
        <end position="53"/>
    </location>
</feature>
<feature type="transmembrane region" description="Helical" evidence="2">
    <location>
        <begin position="77"/>
        <end position="98"/>
    </location>
</feature>
<feature type="transmembrane region" description="Helical" evidence="2">
    <location>
        <begin position="113"/>
        <end position="133"/>
    </location>
</feature>
<feature type="transmembrane region" description="Helical" evidence="2">
    <location>
        <begin position="178"/>
        <end position="198"/>
    </location>
</feature>
<feature type="transmembrane region" description="Helical" evidence="2">
    <location>
        <begin position="226"/>
        <end position="246"/>
    </location>
</feature>
<feature type="transmembrane region" description="Helical" evidence="2">
    <location>
        <begin position="288"/>
        <end position="308"/>
    </location>
</feature>
<feature type="transmembrane region" description="Helical" evidence="2">
    <location>
        <begin position="320"/>
        <end position="340"/>
    </location>
</feature>
<feature type="transmembrane region" description="Helical" evidence="2">
    <location>
        <begin position="347"/>
        <end position="367"/>
    </location>
</feature>
<feature type="binding site" description="axial binding residue" evidence="2">
    <location>
        <position position="83"/>
    </location>
    <ligand>
        <name>heme b</name>
        <dbReference type="ChEBI" id="CHEBI:60344"/>
        <label>b562</label>
    </ligand>
    <ligandPart>
        <name>Fe</name>
        <dbReference type="ChEBI" id="CHEBI:18248"/>
    </ligandPart>
</feature>
<feature type="binding site" description="axial binding residue" evidence="2">
    <location>
        <position position="97"/>
    </location>
    <ligand>
        <name>heme b</name>
        <dbReference type="ChEBI" id="CHEBI:60344"/>
        <label>b566</label>
    </ligand>
    <ligandPart>
        <name>Fe</name>
        <dbReference type="ChEBI" id="CHEBI:18248"/>
    </ligandPart>
</feature>
<feature type="binding site" description="axial binding residue" evidence="2">
    <location>
        <position position="182"/>
    </location>
    <ligand>
        <name>heme b</name>
        <dbReference type="ChEBI" id="CHEBI:60344"/>
        <label>b562</label>
    </ligand>
    <ligandPart>
        <name>Fe</name>
        <dbReference type="ChEBI" id="CHEBI:18248"/>
    </ligandPart>
</feature>
<feature type="binding site" description="axial binding residue" evidence="2">
    <location>
        <position position="196"/>
    </location>
    <ligand>
        <name>heme b</name>
        <dbReference type="ChEBI" id="CHEBI:60344"/>
        <label>b566</label>
    </ligand>
    <ligandPart>
        <name>Fe</name>
        <dbReference type="ChEBI" id="CHEBI:18248"/>
    </ligandPart>
</feature>
<feature type="binding site" evidence="2">
    <location>
        <position position="201"/>
    </location>
    <ligand>
        <name>a ubiquinone</name>
        <dbReference type="ChEBI" id="CHEBI:16389"/>
    </ligand>
</feature>
<accession>O20998</accession>
<name>CYB_BISBO</name>